<organism>
    <name type="scientific">Cebuella pygmaea</name>
    <name type="common">Pygmy marmoset</name>
    <name type="synonym">Callithrix pygmaea</name>
    <dbReference type="NCBI Taxonomy" id="9493"/>
    <lineage>
        <taxon>Eukaryota</taxon>
        <taxon>Metazoa</taxon>
        <taxon>Chordata</taxon>
        <taxon>Craniata</taxon>
        <taxon>Vertebrata</taxon>
        <taxon>Euteleostomi</taxon>
        <taxon>Mammalia</taxon>
        <taxon>Eutheria</taxon>
        <taxon>Euarchontoglires</taxon>
        <taxon>Primates</taxon>
        <taxon>Haplorrhini</taxon>
        <taxon>Platyrrhini</taxon>
        <taxon>Cebidae</taxon>
        <taxon>Callitrichinae</taxon>
        <taxon>Cebuella</taxon>
    </lineage>
</organism>
<protein>
    <recommendedName>
        <fullName>Taste receptor type 1 member 2</fullName>
    </recommendedName>
    <alternativeName>
        <fullName>Sweet taste receptor T1R2</fullName>
    </alternativeName>
</protein>
<proteinExistence type="inferred from homology"/>
<feature type="signal peptide" evidence="2">
    <location>
        <begin position="1"/>
        <end position="19"/>
    </location>
</feature>
<feature type="chain" id="PRO_0000285550" description="Taste receptor type 1 member 2">
    <location>
        <begin position="20"/>
        <end position="834"/>
    </location>
</feature>
<feature type="topological domain" description="Extracellular" evidence="2">
    <location>
        <begin position="20"/>
        <end position="561"/>
    </location>
</feature>
<feature type="transmembrane region" description="Helical; Name=1" evidence="2">
    <location>
        <begin position="562"/>
        <end position="582"/>
    </location>
</feature>
<feature type="topological domain" description="Cytoplasmic" evidence="2">
    <location>
        <begin position="583"/>
        <end position="597"/>
    </location>
</feature>
<feature type="transmembrane region" description="Helical; Name=2" evidence="2">
    <location>
        <begin position="598"/>
        <end position="618"/>
    </location>
</feature>
<feature type="topological domain" description="Extracellular" evidence="2">
    <location>
        <begin position="619"/>
        <end position="630"/>
    </location>
</feature>
<feature type="transmembrane region" description="Helical; Name=3" evidence="2">
    <location>
        <begin position="631"/>
        <end position="651"/>
    </location>
</feature>
<feature type="topological domain" description="Cytoplasmic" evidence="2">
    <location>
        <begin position="652"/>
        <end position="676"/>
    </location>
</feature>
<feature type="transmembrane region" description="Helical; Name=4" evidence="2">
    <location>
        <begin position="677"/>
        <end position="697"/>
    </location>
</feature>
<feature type="topological domain" description="Extracellular" evidence="2">
    <location>
        <begin position="698"/>
        <end position="722"/>
    </location>
</feature>
<feature type="transmembrane region" description="Helical; Name=5" evidence="2">
    <location>
        <begin position="723"/>
        <end position="743"/>
    </location>
</feature>
<feature type="topological domain" description="Cytoplasmic" evidence="2">
    <location>
        <begin position="744"/>
        <end position="755"/>
    </location>
</feature>
<feature type="transmembrane region" description="Helical; Name=6" evidence="2">
    <location>
        <begin position="756"/>
        <end position="776"/>
    </location>
</feature>
<feature type="topological domain" description="Extracellular" evidence="2">
    <location>
        <begin position="777"/>
        <end position="779"/>
    </location>
</feature>
<feature type="transmembrane region" description="Helical; Name=7" evidence="2">
    <location>
        <begin position="780"/>
        <end position="800"/>
    </location>
</feature>
<feature type="topological domain" description="Cytoplasmic" evidence="2">
    <location>
        <begin position="801"/>
        <end position="834"/>
    </location>
</feature>
<feature type="glycosylation site" description="N-linked (GlcNAc...) asparagine" evidence="2">
    <location>
        <position position="84"/>
    </location>
</feature>
<feature type="glycosylation site" description="N-linked (GlcNAc...) asparagine" evidence="2">
    <location>
        <position position="292"/>
    </location>
</feature>
<feature type="glycosylation site" description="N-linked (GlcNAc...) asparagine" evidence="2">
    <location>
        <position position="312"/>
    </location>
</feature>
<feature type="glycosylation site" description="N-linked (GlcNAc...) asparagine" evidence="2">
    <location>
        <position position="363"/>
    </location>
</feature>
<feature type="glycosylation site" description="N-linked (GlcNAc...) asparagine" evidence="2">
    <location>
        <position position="423"/>
    </location>
</feature>
<feature type="glycosylation site" description="N-linked (GlcNAc...) asparagine" evidence="2">
    <location>
        <position position="482"/>
    </location>
</feature>
<feature type="glycosylation site" description="N-linked (GlcNAc...) asparagine" evidence="2">
    <location>
        <position position="522"/>
    </location>
</feature>
<name>TS1R2_CEBPY</name>
<comment type="function">
    <text evidence="1">Putative taste receptor. TAS1R2/TAS1R3 recognizes diverse natural and synthetic sweeteners (By similarity).</text>
</comment>
<comment type="subunit">
    <text evidence="1">Forms heterodimers with TAS1R3.</text>
</comment>
<comment type="subcellular location">
    <subcellularLocation>
        <location evidence="1">Cell membrane</location>
        <topology evidence="1">Multi-pass membrane protein</topology>
    </subcellularLocation>
</comment>
<comment type="similarity">
    <text evidence="3">Belongs to the G-protein coupled receptor 3 family. TAS1R subfamily.</text>
</comment>
<gene>
    <name type="primary">TAS1R2</name>
</gene>
<reference key="1">
    <citation type="submission" date="2006-02" db="EMBL/GenBank/DDBJ databases">
        <title>Sweet receptor gene variation and aspartame blindness in both primates and non-primates.</title>
        <authorList>
            <person name="Li X."/>
            <person name="Wong E.W."/>
            <person name="Li W."/>
            <person name="Lim R."/>
            <person name="Mascioli K.J."/>
            <person name="Maehashi K."/>
            <person name="Bachmanov A.A."/>
            <person name="Tordoff M.G."/>
            <person name="Beauchamp G.K."/>
            <person name="Reed D.R."/>
        </authorList>
    </citation>
    <scope>NUCLEOTIDE SEQUENCE [GENOMIC DNA]</scope>
</reference>
<sequence>MGPRARTVCFLFFLLWVLAELAENSDFHLPGDYLLGGLFTLHANMKGIVHLNFLQVPMCKEYEMKVSGYNLMQAMRFAVEEINNDSSLLPDVLLGYEMVDVCYISNNVQPALYFLAQEDNLLPIQEDYSNYVPRVVAVIGPENSESVMTVAHFLSLFLLPQITYSAISDQLQDKQRFPALLRTTPSAKHHIEAMVQLMLHFHWNWISVLVSSDTYGRDNGQMLGDRLAGGDICIAFQETLPTLQSNQDIMPEDHQRLVSIVEKLQQSTARVVVVFSPDLSLYNFFREVLRQNFTGAVWIASESWAIDPVLHNLTGLHRTGTFLGITIQNVPIPGFSEFRVRGPQAGPTNQRSTCNQECDTCLNSTLSFNTVLRLSGERIVYSVYSAVYAVAHALHSLLGCDHSTCTKRVVYPWQLVQEIWKVNFTLLDHQIFFDPQGDVALHLEIVQWQWDLSQNPFQSIASYNPLQGRLKHIQDISWHTINNTIPVSMCSKRCQSGQKKKPVGIHTCCFECIDCLPGTFLNQTEDEYDCQACPSNEWSHQSETSCFKRRLSFLEWHEAATIAVALLAALGFLXXXXXXXXXXXXXXXPMVRSAGGPMCFLMLTLLLVAYMVVPVYVGPPKVTTCLCRQALFPVCFTICISCITMRSFQIVCVFKMASRFPRAYSYWVRYQGSYVSVAFITALKVVTVVISLLATGLNPTTRADTDDPKIMIISCNPNYRNSLLFNTSLDLLLSVVGFSFAYMGKELPTNYNEAKFITFSMTFYFTSSVSLCTFMSVYDGVLVTIVDLLVTVFNLLAISLGYFGPKCYMILFYPERNTPAYFNSMIQGYTMRRD</sequence>
<evidence type="ECO:0000250" key="1"/>
<evidence type="ECO:0000255" key="2"/>
<evidence type="ECO:0000305" key="3"/>
<dbReference type="EMBL" id="DQ386302">
    <property type="protein sequence ID" value="ABD37686.1"/>
    <property type="molecule type" value="Genomic_DNA"/>
</dbReference>
<dbReference type="GlyCosmos" id="A3QP09">
    <property type="glycosylation" value="7 sites, No reported glycans"/>
</dbReference>
<dbReference type="GO" id="GO:0005886">
    <property type="term" value="C:plasma membrane"/>
    <property type="evidence" value="ECO:0007669"/>
    <property type="project" value="UniProtKB-SubCell"/>
</dbReference>
<dbReference type="GO" id="GO:1903767">
    <property type="term" value="C:sweet taste receptor complex"/>
    <property type="evidence" value="ECO:0007669"/>
    <property type="project" value="TreeGrafter"/>
</dbReference>
<dbReference type="GO" id="GO:0004930">
    <property type="term" value="F:G protein-coupled receptor activity"/>
    <property type="evidence" value="ECO:0007669"/>
    <property type="project" value="UniProtKB-KW"/>
</dbReference>
<dbReference type="GO" id="GO:0033041">
    <property type="term" value="F:sweet taste receptor activity"/>
    <property type="evidence" value="ECO:0007669"/>
    <property type="project" value="TreeGrafter"/>
</dbReference>
<dbReference type="FunFam" id="3.40.50.2300:FF:000016">
    <property type="entry name" value="Taste 1 receptor member 2"/>
    <property type="match status" value="1"/>
</dbReference>
<dbReference type="FunFam" id="2.10.50.30:FF:000004">
    <property type="entry name" value="Taste receptor type 1 member 3-like protein"/>
    <property type="match status" value="1"/>
</dbReference>
<dbReference type="Gene3D" id="3.40.50.2300">
    <property type="match status" value="2"/>
</dbReference>
<dbReference type="Gene3D" id="2.10.50.30">
    <property type="entry name" value="GPCR, family 3, nine cysteines domain"/>
    <property type="match status" value="1"/>
</dbReference>
<dbReference type="InterPro" id="IPR001828">
    <property type="entry name" value="ANF_lig-bd_rcpt"/>
</dbReference>
<dbReference type="InterPro" id="IPR000337">
    <property type="entry name" value="GPCR_3"/>
</dbReference>
<dbReference type="InterPro" id="IPR011500">
    <property type="entry name" value="GPCR_3_9-Cys_dom"/>
</dbReference>
<dbReference type="InterPro" id="IPR038550">
    <property type="entry name" value="GPCR_3_9-Cys_sf"/>
</dbReference>
<dbReference type="InterPro" id="IPR017978">
    <property type="entry name" value="GPCR_3_C"/>
</dbReference>
<dbReference type="InterPro" id="IPR000068">
    <property type="entry name" value="GPCR_3_Ca_sens_rcpt-rel"/>
</dbReference>
<dbReference type="InterPro" id="IPR017979">
    <property type="entry name" value="GPCR_3_CS"/>
</dbReference>
<dbReference type="InterPro" id="IPR028082">
    <property type="entry name" value="Peripla_BP_I"/>
</dbReference>
<dbReference type="PANTHER" id="PTHR24061">
    <property type="entry name" value="CALCIUM-SENSING RECEPTOR-RELATED"/>
    <property type="match status" value="1"/>
</dbReference>
<dbReference type="PANTHER" id="PTHR24061:SF517">
    <property type="entry name" value="TASTE RECEPTOR TYPE 1 MEMBER 2"/>
    <property type="match status" value="1"/>
</dbReference>
<dbReference type="Pfam" id="PF00003">
    <property type="entry name" value="7tm_3"/>
    <property type="match status" value="1"/>
</dbReference>
<dbReference type="Pfam" id="PF01094">
    <property type="entry name" value="ANF_receptor"/>
    <property type="match status" value="1"/>
</dbReference>
<dbReference type="Pfam" id="PF07562">
    <property type="entry name" value="NCD3G"/>
    <property type="match status" value="1"/>
</dbReference>
<dbReference type="PRINTS" id="PR00248">
    <property type="entry name" value="GPCRMGR"/>
</dbReference>
<dbReference type="SUPFAM" id="SSF53822">
    <property type="entry name" value="Periplasmic binding protein-like I"/>
    <property type="match status" value="1"/>
</dbReference>
<dbReference type="PROSITE" id="PS00981">
    <property type="entry name" value="G_PROTEIN_RECEP_F3_3"/>
    <property type="match status" value="1"/>
</dbReference>
<dbReference type="PROSITE" id="PS50259">
    <property type="entry name" value="G_PROTEIN_RECEP_F3_4"/>
    <property type="match status" value="1"/>
</dbReference>
<accession>A3QP09</accession>
<keyword id="KW-1003">Cell membrane</keyword>
<keyword id="KW-0297">G-protein coupled receptor</keyword>
<keyword id="KW-0325">Glycoprotein</keyword>
<keyword id="KW-0472">Membrane</keyword>
<keyword id="KW-0675">Receptor</keyword>
<keyword id="KW-0716">Sensory transduction</keyword>
<keyword id="KW-0732">Signal</keyword>
<keyword id="KW-0919">Taste</keyword>
<keyword id="KW-0807">Transducer</keyword>
<keyword id="KW-0812">Transmembrane</keyword>
<keyword id="KW-1133">Transmembrane helix</keyword>